<feature type="chain" id="PRO_0000245330" description="Growth factor receptor-bound protein 7">
    <location>
        <begin position="1"/>
        <end position="532"/>
    </location>
</feature>
<feature type="domain" description="Ras-associating" evidence="5">
    <location>
        <begin position="100"/>
        <end position="186"/>
    </location>
</feature>
<feature type="domain" description="PH" evidence="4">
    <location>
        <begin position="229"/>
        <end position="338"/>
    </location>
</feature>
<feature type="domain" description="SH2" evidence="6">
    <location>
        <begin position="431"/>
        <end position="527"/>
    </location>
</feature>
<feature type="region of interest" description="Disordered" evidence="7">
    <location>
        <begin position="1"/>
        <end position="90"/>
    </location>
</feature>
<feature type="compositionally biased region" description="Low complexity" evidence="7">
    <location>
        <begin position="1"/>
        <end position="24"/>
    </location>
</feature>
<feature type="compositionally biased region" description="Low complexity" evidence="7">
    <location>
        <begin position="76"/>
        <end position="89"/>
    </location>
</feature>
<feature type="site" description="Important for lipid binding and for stimulation of cell migration" evidence="1">
    <location>
        <position position="239"/>
    </location>
</feature>
<feature type="site" description="Important for dimerization and for HRAS activation" evidence="1">
    <location>
        <position position="511"/>
    </location>
</feature>
<feature type="modified residue" description="Phosphotyrosine; by FAK1" evidence="3">
    <location>
        <position position="188"/>
    </location>
</feature>
<feature type="modified residue" description="Phosphoserine" evidence="3">
    <location>
        <position position="361"/>
    </location>
</feature>
<dbReference type="EMBL" id="BC114669">
    <property type="protein sequence ID" value="AAI14670.1"/>
    <property type="molecule type" value="mRNA"/>
</dbReference>
<dbReference type="RefSeq" id="NP_001039479.1">
    <property type="nucleotide sequence ID" value="NM_001046014.1"/>
</dbReference>
<dbReference type="RefSeq" id="XP_005220751.1">
    <property type="nucleotide sequence ID" value="XM_005220694.3"/>
</dbReference>
<dbReference type="RefSeq" id="XP_005220752.1">
    <property type="nucleotide sequence ID" value="XM_005220695.3"/>
</dbReference>
<dbReference type="RefSeq" id="XP_005220753.1">
    <property type="nucleotide sequence ID" value="XM_005220696.3"/>
</dbReference>
<dbReference type="RefSeq" id="XP_005220754.1">
    <property type="nucleotide sequence ID" value="XM_005220697.2"/>
</dbReference>
<dbReference type="RefSeq" id="XP_015314313.1">
    <property type="nucleotide sequence ID" value="XM_015458827.1"/>
</dbReference>
<dbReference type="SMR" id="Q1RMW5"/>
<dbReference type="FunCoup" id="Q1RMW5">
    <property type="interactions" value="110"/>
</dbReference>
<dbReference type="STRING" id="9913.ENSBTAP00000023091"/>
<dbReference type="PaxDb" id="9913-ENSBTAP00000023091"/>
<dbReference type="Ensembl" id="ENSBTAT00000023091.5">
    <property type="protein sequence ID" value="ENSBTAP00000023091.3"/>
    <property type="gene ID" value="ENSBTAG00000017366.5"/>
</dbReference>
<dbReference type="GeneID" id="508847"/>
<dbReference type="KEGG" id="bta:508847"/>
<dbReference type="CTD" id="2886"/>
<dbReference type="VEuPathDB" id="HostDB:ENSBTAG00000017366"/>
<dbReference type="VGNC" id="VGNC:29632">
    <property type="gene designation" value="GRB7"/>
</dbReference>
<dbReference type="eggNOG" id="KOG3751">
    <property type="taxonomic scope" value="Eukaryota"/>
</dbReference>
<dbReference type="GeneTree" id="ENSGT00940000158710"/>
<dbReference type="HOGENOM" id="CLU_023207_0_1_1"/>
<dbReference type="InParanoid" id="Q1RMW5"/>
<dbReference type="OMA" id="KLWKRCF"/>
<dbReference type="OrthoDB" id="5977126at2759"/>
<dbReference type="TreeFam" id="TF317511"/>
<dbReference type="Reactome" id="R-BTA-1306955">
    <property type="pathway name" value="GRB7 events in ERBB2 signaling"/>
</dbReference>
<dbReference type="Reactome" id="R-BTA-1433557">
    <property type="pathway name" value="Signaling by SCF-KIT"/>
</dbReference>
<dbReference type="Reactome" id="R-BTA-186763">
    <property type="pathway name" value="Downstream signal transduction"/>
</dbReference>
<dbReference type="Reactome" id="R-BTA-210993">
    <property type="pathway name" value="Tie2 Signaling"/>
</dbReference>
<dbReference type="Reactome" id="R-BTA-8853659">
    <property type="pathway name" value="RET signaling"/>
</dbReference>
<dbReference type="Reactome" id="R-BTA-9696273">
    <property type="pathway name" value="RND1 GTPase cycle"/>
</dbReference>
<dbReference type="Proteomes" id="UP000009136">
    <property type="component" value="Chromosome 19"/>
</dbReference>
<dbReference type="Bgee" id="ENSBTAG00000017366">
    <property type="expression patterns" value="Expressed in placenta and 81 other cell types or tissues"/>
</dbReference>
<dbReference type="GO" id="GO:0042995">
    <property type="term" value="C:cell projection"/>
    <property type="evidence" value="ECO:0007669"/>
    <property type="project" value="UniProtKB-SubCell"/>
</dbReference>
<dbReference type="GO" id="GO:0010494">
    <property type="term" value="C:cytoplasmic stress granule"/>
    <property type="evidence" value="ECO:0000250"/>
    <property type="project" value="UniProtKB"/>
</dbReference>
<dbReference type="GO" id="GO:0005829">
    <property type="term" value="C:cytosol"/>
    <property type="evidence" value="ECO:0000250"/>
    <property type="project" value="UniProtKB"/>
</dbReference>
<dbReference type="GO" id="GO:0005925">
    <property type="term" value="C:focal adhesion"/>
    <property type="evidence" value="ECO:0000250"/>
    <property type="project" value="UniProtKB"/>
</dbReference>
<dbReference type="GO" id="GO:0005886">
    <property type="term" value="C:plasma membrane"/>
    <property type="evidence" value="ECO:0007669"/>
    <property type="project" value="UniProtKB-SubCell"/>
</dbReference>
<dbReference type="GO" id="GO:0035091">
    <property type="term" value="F:phosphatidylinositol binding"/>
    <property type="evidence" value="ECO:0000250"/>
    <property type="project" value="UniProtKB"/>
</dbReference>
<dbReference type="GO" id="GO:0003723">
    <property type="term" value="F:RNA binding"/>
    <property type="evidence" value="ECO:0007669"/>
    <property type="project" value="UniProtKB-KW"/>
</dbReference>
<dbReference type="GO" id="GO:0017148">
    <property type="term" value="P:negative regulation of translation"/>
    <property type="evidence" value="ECO:0000250"/>
    <property type="project" value="UniProtKB"/>
</dbReference>
<dbReference type="GO" id="GO:0030335">
    <property type="term" value="P:positive regulation of cell migration"/>
    <property type="evidence" value="ECO:0000250"/>
    <property type="project" value="UniProtKB"/>
</dbReference>
<dbReference type="GO" id="GO:0007165">
    <property type="term" value="P:signal transduction"/>
    <property type="evidence" value="ECO:0007669"/>
    <property type="project" value="InterPro"/>
</dbReference>
<dbReference type="GO" id="GO:0034063">
    <property type="term" value="P:stress granule assembly"/>
    <property type="evidence" value="ECO:0000250"/>
    <property type="project" value="UniProtKB"/>
</dbReference>
<dbReference type="CDD" id="cd01259">
    <property type="entry name" value="PH_APBB1IP"/>
    <property type="match status" value="1"/>
</dbReference>
<dbReference type="CDD" id="cd16140">
    <property type="entry name" value="RA_GRB7"/>
    <property type="match status" value="1"/>
</dbReference>
<dbReference type="CDD" id="cd10413">
    <property type="entry name" value="SH2_Grb7"/>
    <property type="match status" value="1"/>
</dbReference>
<dbReference type="FunFam" id="3.30.505.10:FF:000015">
    <property type="entry name" value="Growth factor receptor-bound protein 10 isoform X1"/>
    <property type="match status" value="1"/>
</dbReference>
<dbReference type="FunFam" id="2.30.29.30:FF:000062">
    <property type="entry name" value="growth factor receptor-bound protein 10 isoform X1"/>
    <property type="match status" value="1"/>
</dbReference>
<dbReference type="FunFam" id="3.10.20.90:FF:000056">
    <property type="entry name" value="growth factor receptor-bound protein 10 isoform X1"/>
    <property type="match status" value="1"/>
</dbReference>
<dbReference type="Gene3D" id="3.10.20.90">
    <property type="entry name" value="Phosphatidylinositol 3-kinase Catalytic Subunit, Chain A, domain 1"/>
    <property type="match status" value="1"/>
</dbReference>
<dbReference type="Gene3D" id="2.30.29.30">
    <property type="entry name" value="Pleckstrin-homology domain (PH domain)/Phosphotyrosine-binding domain (PTB)"/>
    <property type="match status" value="1"/>
</dbReference>
<dbReference type="Gene3D" id="3.30.505.10">
    <property type="entry name" value="SH2 domain"/>
    <property type="match status" value="1"/>
</dbReference>
<dbReference type="InterPro" id="IPR015042">
    <property type="entry name" value="BPS-dom"/>
</dbReference>
<dbReference type="InterPro" id="IPR039664">
    <property type="entry name" value="GRB/APBB1IP"/>
</dbReference>
<dbReference type="InterPro" id="IPR046986">
    <property type="entry name" value="GRB7_RA"/>
</dbReference>
<dbReference type="InterPro" id="IPR035032">
    <property type="entry name" value="Grb7_SH2"/>
</dbReference>
<dbReference type="InterPro" id="IPR011993">
    <property type="entry name" value="PH-like_dom_sf"/>
</dbReference>
<dbReference type="InterPro" id="IPR039665">
    <property type="entry name" value="PH_APBB1IP"/>
</dbReference>
<dbReference type="InterPro" id="IPR001849">
    <property type="entry name" value="PH_domain"/>
</dbReference>
<dbReference type="InterPro" id="IPR000159">
    <property type="entry name" value="RA_dom"/>
</dbReference>
<dbReference type="InterPro" id="IPR000980">
    <property type="entry name" value="SH2"/>
</dbReference>
<dbReference type="InterPro" id="IPR036860">
    <property type="entry name" value="SH2_dom_sf"/>
</dbReference>
<dbReference type="InterPro" id="IPR029071">
    <property type="entry name" value="Ubiquitin-like_domsf"/>
</dbReference>
<dbReference type="PANTHER" id="PTHR11243">
    <property type="entry name" value="GROWTH FACTOR RECEPTOR-BOUND PROTEIN"/>
    <property type="match status" value="1"/>
</dbReference>
<dbReference type="PANTHER" id="PTHR11243:SF25">
    <property type="entry name" value="GROWTH FACTOR RECEPTOR-BOUND PROTEIN 7"/>
    <property type="match status" value="1"/>
</dbReference>
<dbReference type="Pfam" id="PF08947">
    <property type="entry name" value="BPS"/>
    <property type="match status" value="1"/>
</dbReference>
<dbReference type="Pfam" id="PF00169">
    <property type="entry name" value="PH"/>
    <property type="match status" value="1"/>
</dbReference>
<dbReference type="Pfam" id="PF21989">
    <property type="entry name" value="RA_2"/>
    <property type="match status" value="1"/>
</dbReference>
<dbReference type="Pfam" id="PF00017">
    <property type="entry name" value="SH2"/>
    <property type="match status" value="1"/>
</dbReference>
<dbReference type="PRINTS" id="PR00401">
    <property type="entry name" value="SH2DOMAIN"/>
</dbReference>
<dbReference type="SMART" id="SM00233">
    <property type="entry name" value="PH"/>
    <property type="match status" value="1"/>
</dbReference>
<dbReference type="SMART" id="SM00314">
    <property type="entry name" value="RA"/>
    <property type="match status" value="1"/>
</dbReference>
<dbReference type="SMART" id="SM00252">
    <property type="entry name" value="SH2"/>
    <property type="match status" value="1"/>
</dbReference>
<dbReference type="SUPFAM" id="SSF50729">
    <property type="entry name" value="PH domain-like"/>
    <property type="match status" value="1"/>
</dbReference>
<dbReference type="SUPFAM" id="SSF55550">
    <property type="entry name" value="SH2 domain"/>
    <property type="match status" value="1"/>
</dbReference>
<dbReference type="SUPFAM" id="SSF54236">
    <property type="entry name" value="Ubiquitin-like"/>
    <property type="match status" value="1"/>
</dbReference>
<dbReference type="PROSITE" id="PS50003">
    <property type="entry name" value="PH_DOMAIN"/>
    <property type="match status" value="1"/>
</dbReference>
<dbReference type="PROSITE" id="PS50200">
    <property type="entry name" value="RA"/>
    <property type="match status" value="1"/>
</dbReference>
<dbReference type="PROSITE" id="PS50001">
    <property type="entry name" value="SH2"/>
    <property type="match status" value="1"/>
</dbReference>
<comment type="function">
    <text evidence="1">Adapter protein that interacts with the cytoplasmic domain of numerous receptor kinases and modulates down-stream signaling. Promotes activation of down-stream protein kinases, including STAT3, AKT1, MAPK1 and/or MAPK3. Promotes activation of HRAS. Plays a role in signal transduction in response to EGF. Plays a role in the regulation of cell proliferation and cell migration. Plays a role in the assembly and stability of RNA stress granules. Binds to the 5'UTR of target mRNA molecules and represses translation of target mRNA species, when not phosphorylated. Phosphorylation impairs RNA binding and promotes stress granule disassembly during recovery after cellular stress (By similarity).</text>
</comment>
<comment type="subunit">
    <text evidence="1">Homodimer. Interacts (via SH2 domain) with EGFR, ERBB2, ERBB3 (when phosphorylated), ERBB4 (when phosphorylated), EPHB1, INSR, FGFR1, PDGFRA (tyrosine phosphorylated) and PDGFRB (tyrosine phosphorylated). Interacts (via SH2 domain) with TEK/TIE2 (tyrosine phosphorylated). Interacts with SHC1. Interacts with RND1. Interacts (when tyrosine phosphorylated) with FHL2 and HAX1 (By similarity). Interacts (via SH2 domain) with RET and PTK2/FAK1. Interacts (when not phosphorylated) with ELAVL1. In stressed cells, but not in normal cells, part of a complex that contains at least GRB7, PTK2/FAK1, STAU1, ELAVL1 and TIA1. Interacts (via SH2 domain) with KIT (phosphorylated) (By similarity).</text>
</comment>
<comment type="subcellular location">
    <subcellularLocation>
        <location evidence="3">Cytoplasm</location>
    </subcellularLocation>
    <subcellularLocation>
        <location evidence="3">Cell projection</location>
    </subcellularLocation>
    <subcellularLocation>
        <location evidence="3">Cell junction</location>
        <location evidence="3">Focal adhesion</location>
    </subcellularLocation>
    <subcellularLocation>
        <location evidence="3">Cell membrane</location>
        <topology evidence="3">Peripheral membrane protein</topology>
        <orientation evidence="3">Cytoplasmic side</orientation>
    </subcellularLocation>
    <subcellularLocation>
        <location evidence="2">Cytoplasmic granule</location>
    </subcellularLocation>
    <text evidence="2">Predominantly cytoplasmic. Detected in stress granules where mRNA is stored under stress conditions.</text>
</comment>
<comment type="domain">
    <text evidence="1">The PH domain mediates interaction with membranes containing phosphoinositides.</text>
</comment>
<comment type="PTM">
    <text evidence="1">Phosphorylated on serine and threonine residues in response to activation of receptor kinases. Phosphorylated on tyrosine residues by TEK/TIE2. Phosphorylated on tyrosine residues by PTK2/FAK1, and possibly also other kinases. Phosphorylation is enhanced by activation of receptor kinases by a cognate ligand. Tyrosine phosphorylation is essential for activation of down-stream protein kinases. Phosphorylation decreases affinity for target mRNA molecules (By similarity).</text>
</comment>
<comment type="similarity">
    <text evidence="8">Belongs to the GRB7/10/14 family.</text>
</comment>
<gene>
    <name type="primary">GRB7</name>
</gene>
<proteinExistence type="evidence at transcript level"/>
<evidence type="ECO:0000250" key="1"/>
<evidence type="ECO:0000250" key="2">
    <source>
        <dbReference type="UniProtKB" id="Q03160"/>
    </source>
</evidence>
<evidence type="ECO:0000250" key="3">
    <source>
        <dbReference type="UniProtKB" id="Q14451"/>
    </source>
</evidence>
<evidence type="ECO:0000255" key="4">
    <source>
        <dbReference type="PROSITE-ProRule" id="PRU00145"/>
    </source>
</evidence>
<evidence type="ECO:0000255" key="5">
    <source>
        <dbReference type="PROSITE-ProRule" id="PRU00166"/>
    </source>
</evidence>
<evidence type="ECO:0000255" key="6">
    <source>
        <dbReference type="PROSITE-ProRule" id="PRU00191"/>
    </source>
</evidence>
<evidence type="ECO:0000256" key="7">
    <source>
        <dbReference type="SAM" id="MobiDB-lite"/>
    </source>
</evidence>
<evidence type="ECO:0000305" key="8"/>
<accession>Q1RMW5</accession>
<sequence length="532" mass="59653">MELGLSPLHLSSSPEDLYLASGTPPGTPPPLDAPLSGEVKRSQPLPIPTSRKLLREEELQSTSLPSIPNPFPELCSPSSQSPILGGSSSARGLLPRDTSCPHVIKVYSEDGTCRSVEVATGATARYVCEMLVQRSHALSDENWGLVECHPYLALERALEDHESVAEVQAAWPIGGDSRIVFRKNFAKYELFKSTPHSLFPEKMVSSCLDAHTGMSHEDVIQNFLNAGSFPEIQGFLQLRGSGRKLWKRFFCFLRRSGLYYSTKGTSKDPRHLQYVADVNESNVYVVTQGRKLYGMPTDFGFCIKPNKLRNGHKGLRLFCTEDERSRSCWLAAFRLFKFGVQLYKNYQQTLCRHMCPPCGGSPPSRSVSDDTLVAMDFSGHAGRVIENPREALSAALEEAQAWRKKTNHRLSLPTPSSGTSLSAAIHRTQPWFHGRISREESQRLIRQQGLVDGLFLVRESQRNPQGFVLSLCHVQKVKHYLILPSEEEGRLYFSMDDGLTRFTDLLQLVEFHQLNRGILPCLLRYCCTRVAL</sequence>
<name>GRB7_BOVIN</name>
<protein>
    <recommendedName>
        <fullName>Growth factor receptor-bound protein 7</fullName>
    </recommendedName>
    <alternativeName>
        <fullName>Epidermal growth factor receptor GRB-7</fullName>
    </alternativeName>
    <alternativeName>
        <fullName>GRB7 adapter protein</fullName>
    </alternativeName>
</protein>
<keyword id="KW-0965">Cell junction</keyword>
<keyword id="KW-1003">Cell membrane</keyword>
<keyword id="KW-0966">Cell projection</keyword>
<keyword id="KW-0963">Cytoplasm</keyword>
<keyword id="KW-0446">Lipid-binding</keyword>
<keyword id="KW-0472">Membrane</keyword>
<keyword id="KW-0597">Phosphoprotein</keyword>
<keyword id="KW-1185">Reference proteome</keyword>
<keyword id="KW-0678">Repressor</keyword>
<keyword id="KW-0694">RNA-binding</keyword>
<keyword id="KW-0727">SH2 domain</keyword>
<reference key="1">
    <citation type="submission" date="2006-04" db="EMBL/GenBank/DDBJ databases">
        <authorList>
            <consortium name="NIH - Mammalian Gene Collection (MGC) project"/>
        </authorList>
    </citation>
    <scope>NUCLEOTIDE SEQUENCE [LARGE SCALE MRNA]</scope>
    <source>
        <strain>Hereford</strain>
        <tissue>Uterus</tissue>
    </source>
</reference>
<organism>
    <name type="scientific">Bos taurus</name>
    <name type="common">Bovine</name>
    <dbReference type="NCBI Taxonomy" id="9913"/>
    <lineage>
        <taxon>Eukaryota</taxon>
        <taxon>Metazoa</taxon>
        <taxon>Chordata</taxon>
        <taxon>Craniata</taxon>
        <taxon>Vertebrata</taxon>
        <taxon>Euteleostomi</taxon>
        <taxon>Mammalia</taxon>
        <taxon>Eutheria</taxon>
        <taxon>Laurasiatheria</taxon>
        <taxon>Artiodactyla</taxon>
        <taxon>Ruminantia</taxon>
        <taxon>Pecora</taxon>
        <taxon>Bovidae</taxon>
        <taxon>Bovinae</taxon>
        <taxon>Bos</taxon>
    </lineage>
</organism>